<comment type="subunit">
    <text evidence="4">Interacts with EPS15R.</text>
</comment>
<comment type="alternative products">
    <event type="alternative splicing"/>
    <isoform>
        <id>Q80WC7-1</id>
        <name>1</name>
        <sequence type="displayed"/>
    </isoform>
    <isoform>
        <id>Q80WC7-2</id>
        <name>2</name>
        <sequence type="described" ref="VSP_010669 VSP_010670"/>
    </isoform>
</comment>
<comment type="domain">
    <text>Contains FG repeats and 4 N-P-F repeats.</text>
</comment>
<keyword id="KW-0007">Acetylation</keyword>
<keyword id="KW-0025">Alternative splicing</keyword>
<keyword id="KW-0479">Metal-binding</keyword>
<keyword id="KW-1185">Reference proteome</keyword>
<keyword id="KW-0677">Repeat</keyword>
<keyword id="KW-0862">Zinc</keyword>
<keyword id="KW-0863">Zinc-finger</keyword>
<protein>
    <recommendedName>
        <fullName>Arf-GAP domain and FG repeat-containing protein 2</fullName>
    </recommendedName>
    <alternativeName>
        <fullName>HIV-1 Rev-binding protein-like protein</fullName>
    </alternativeName>
    <alternativeName>
        <fullName>Rev/Rex activation domain-binding protein related</fullName>
        <shortName>RAB-R</shortName>
    </alternativeName>
</protein>
<gene>
    <name type="primary">Agfg2</name>
    <name type="synonym">Hrbl</name>
    <name type="synonym">Rabr</name>
</gene>
<proteinExistence type="evidence at protein level"/>
<evidence type="ECO:0000250" key="1">
    <source>
        <dbReference type="UniProtKB" id="O95081"/>
    </source>
</evidence>
<evidence type="ECO:0000255" key="2">
    <source>
        <dbReference type="PROSITE-ProRule" id="PRU00288"/>
    </source>
</evidence>
<evidence type="ECO:0000256" key="3">
    <source>
        <dbReference type="SAM" id="MobiDB-lite"/>
    </source>
</evidence>
<evidence type="ECO:0000269" key="4">
    <source>
    </source>
</evidence>
<evidence type="ECO:0000303" key="5">
    <source>
    </source>
</evidence>
<dbReference type="EMBL" id="BC003330">
    <property type="protein sequence ID" value="AAH03330.1"/>
    <property type="molecule type" value="mRNA"/>
</dbReference>
<dbReference type="EMBL" id="BC046788">
    <property type="protein sequence ID" value="AAH46788.1"/>
    <property type="molecule type" value="mRNA"/>
</dbReference>
<dbReference type="EMBL" id="AK050881">
    <property type="protein sequence ID" value="BAC34441.1"/>
    <property type="molecule type" value="mRNA"/>
</dbReference>
<dbReference type="CCDS" id="CCDS19774.1">
    <molecule id="Q80WC7-1"/>
</dbReference>
<dbReference type="RefSeq" id="NP_835456.1">
    <molecule id="Q80WC7-1"/>
    <property type="nucleotide sequence ID" value="NM_178162.3"/>
</dbReference>
<dbReference type="BioGRID" id="231167">
    <property type="interactions" value="5"/>
</dbReference>
<dbReference type="FunCoup" id="Q80WC7">
    <property type="interactions" value="433"/>
</dbReference>
<dbReference type="STRING" id="10090.ENSMUSP00000098112"/>
<dbReference type="GlyGen" id="Q80WC7">
    <property type="glycosylation" value="9 sites, 1 O-linked glycan (6 sites)"/>
</dbReference>
<dbReference type="iPTMnet" id="Q80WC7"/>
<dbReference type="PhosphoSitePlus" id="Q80WC7"/>
<dbReference type="SwissPalm" id="Q80WC7"/>
<dbReference type="jPOST" id="Q80WC7"/>
<dbReference type="PaxDb" id="10090-ENSMUSP00000031736"/>
<dbReference type="ProteomicsDB" id="281953">
    <molecule id="Q80WC7-1"/>
</dbReference>
<dbReference type="ProteomicsDB" id="281954">
    <molecule id="Q80WC7-2"/>
</dbReference>
<dbReference type="Pumba" id="Q80WC7"/>
<dbReference type="Antibodypedia" id="16493">
    <property type="antibodies" value="147 antibodies from 27 providers"/>
</dbReference>
<dbReference type="DNASU" id="231801"/>
<dbReference type="Ensembl" id="ENSMUST00000031736.16">
    <molecule id="Q80WC7-1"/>
    <property type="protein sequence ID" value="ENSMUSP00000031736.10"/>
    <property type="gene ID" value="ENSMUSG00000029722.16"/>
</dbReference>
<dbReference type="GeneID" id="231801"/>
<dbReference type="KEGG" id="mmu:231801"/>
<dbReference type="UCSC" id="uc009adl.2">
    <molecule id="Q80WC7-1"/>
    <property type="organism name" value="mouse"/>
</dbReference>
<dbReference type="UCSC" id="uc009ado.3">
    <molecule id="Q80WC7-2"/>
    <property type="organism name" value="mouse"/>
</dbReference>
<dbReference type="AGR" id="MGI:2443267"/>
<dbReference type="CTD" id="3268"/>
<dbReference type="MGI" id="MGI:2443267">
    <property type="gene designation" value="Agfg2"/>
</dbReference>
<dbReference type="VEuPathDB" id="HostDB:ENSMUSG00000029722"/>
<dbReference type="eggNOG" id="KOG0702">
    <property type="taxonomic scope" value="Eukaryota"/>
</dbReference>
<dbReference type="GeneTree" id="ENSGT00940000161071"/>
<dbReference type="HOGENOM" id="CLU_027801_1_0_1"/>
<dbReference type="InParanoid" id="Q80WC7"/>
<dbReference type="OMA" id="DVFGDIW"/>
<dbReference type="OrthoDB" id="6036at2759"/>
<dbReference type="PhylomeDB" id="Q80WC7"/>
<dbReference type="TreeFam" id="TF325357"/>
<dbReference type="BioGRID-ORCS" id="231801">
    <property type="hits" value="2 hits in 77 CRISPR screens"/>
</dbReference>
<dbReference type="PRO" id="PR:Q80WC7"/>
<dbReference type="Proteomes" id="UP000000589">
    <property type="component" value="Chromosome 5"/>
</dbReference>
<dbReference type="RNAct" id="Q80WC7">
    <property type="molecule type" value="protein"/>
</dbReference>
<dbReference type="Bgee" id="ENSMUSG00000029722">
    <property type="expression patterns" value="Expressed in thymus and 248 other cell types or tissues"/>
</dbReference>
<dbReference type="ExpressionAtlas" id="Q80WC7">
    <property type="expression patterns" value="baseline and differential"/>
</dbReference>
<dbReference type="GO" id="GO:0005096">
    <property type="term" value="F:GTPase activator activity"/>
    <property type="evidence" value="ECO:0007669"/>
    <property type="project" value="InterPro"/>
</dbReference>
<dbReference type="GO" id="GO:0008270">
    <property type="term" value="F:zinc ion binding"/>
    <property type="evidence" value="ECO:0007669"/>
    <property type="project" value="UniProtKB-KW"/>
</dbReference>
<dbReference type="CDD" id="cd17903">
    <property type="entry name" value="ArfGap_AGFG2"/>
    <property type="match status" value="1"/>
</dbReference>
<dbReference type="FunFam" id="1.10.220.150:FF:000005">
    <property type="entry name" value="Arf-GAP domain and FG repeat-containing protein 1"/>
    <property type="match status" value="1"/>
</dbReference>
<dbReference type="Gene3D" id="1.10.220.150">
    <property type="entry name" value="Arf GTPase activating protein"/>
    <property type="match status" value="1"/>
</dbReference>
<dbReference type="InterPro" id="IPR052248">
    <property type="entry name" value="Arf-GAP_FG-repeat_protein"/>
</dbReference>
<dbReference type="InterPro" id="IPR037278">
    <property type="entry name" value="ARFGAP/RecO"/>
</dbReference>
<dbReference type="InterPro" id="IPR001164">
    <property type="entry name" value="ArfGAP_dom"/>
</dbReference>
<dbReference type="InterPro" id="IPR038508">
    <property type="entry name" value="ArfGAP_dom_sf"/>
</dbReference>
<dbReference type="PANTHER" id="PTHR46134:SF4">
    <property type="entry name" value="ARF-GAP DOMAIN AND FG REPEAT-CONTAINING PROTEIN 2"/>
    <property type="match status" value="1"/>
</dbReference>
<dbReference type="PANTHER" id="PTHR46134">
    <property type="entry name" value="DRONGO, ISOFORM F"/>
    <property type="match status" value="1"/>
</dbReference>
<dbReference type="Pfam" id="PF01412">
    <property type="entry name" value="ArfGap"/>
    <property type="match status" value="1"/>
</dbReference>
<dbReference type="PRINTS" id="PR00405">
    <property type="entry name" value="REVINTRACTNG"/>
</dbReference>
<dbReference type="SMART" id="SM00105">
    <property type="entry name" value="ArfGap"/>
    <property type="match status" value="1"/>
</dbReference>
<dbReference type="SUPFAM" id="SSF57863">
    <property type="entry name" value="ArfGap/RecO-like zinc finger"/>
    <property type="match status" value="1"/>
</dbReference>
<dbReference type="PROSITE" id="PS50115">
    <property type="entry name" value="ARFGAP"/>
    <property type="match status" value="1"/>
</dbReference>
<reference key="1">
    <citation type="journal article" date="2004" name="Genome Res.">
        <title>The status, quality, and expansion of the NIH full-length cDNA project: the Mammalian Gene Collection (MGC).</title>
        <authorList>
            <consortium name="The MGC Project Team"/>
        </authorList>
    </citation>
    <scope>NUCLEOTIDE SEQUENCE [LARGE SCALE MRNA] (ISOFORMS 1 AND 2)</scope>
    <source>
        <strain>C57BL/6J</strain>
        <tissue>Brain</tissue>
        <tissue>Mammary tumor</tissue>
    </source>
</reference>
<reference key="2">
    <citation type="journal article" date="2005" name="Science">
        <title>The transcriptional landscape of the mammalian genome.</title>
        <authorList>
            <person name="Carninci P."/>
            <person name="Kasukawa T."/>
            <person name="Katayama S."/>
            <person name="Gough J."/>
            <person name="Frith M.C."/>
            <person name="Maeda N."/>
            <person name="Oyama R."/>
            <person name="Ravasi T."/>
            <person name="Lenhard B."/>
            <person name="Wells C."/>
            <person name="Kodzius R."/>
            <person name="Shimokawa K."/>
            <person name="Bajic V.B."/>
            <person name="Brenner S.E."/>
            <person name="Batalov S."/>
            <person name="Forrest A.R."/>
            <person name="Zavolan M."/>
            <person name="Davis M.J."/>
            <person name="Wilming L.G."/>
            <person name="Aidinis V."/>
            <person name="Allen J.E."/>
            <person name="Ambesi-Impiombato A."/>
            <person name="Apweiler R."/>
            <person name="Aturaliya R.N."/>
            <person name="Bailey T.L."/>
            <person name="Bansal M."/>
            <person name="Baxter L."/>
            <person name="Beisel K.W."/>
            <person name="Bersano T."/>
            <person name="Bono H."/>
            <person name="Chalk A.M."/>
            <person name="Chiu K.P."/>
            <person name="Choudhary V."/>
            <person name="Christoffels A."/>
            <person name="Clutterbuck D.R."/>
            <person name="Crowe M.L."/>
            <person name="Dalla E."/>
            <person name="Dalrymple B.P."/>
            <person name="de Bono B."/>
            <person name="Della Gatta G."/>
            <person name="di Bernardo D."/>
            <person name="Down T."/>
            <person name="Engstrom P."/>
            <person name="Fagiolini M."/>
            <person name="Faulkner G."/>
            <person name="Fletcher C.F."/>
            <person name="Fukushima T."/>
            <person name="Furuno M."/>
            <person name="Futaki S."/>
            <person name="Gariboldi M."/>
            <person name="Georgii-Hemming P."/>
            <person name="Gingeras T.R."/>
            <person name="Gojobori T."/>
            <person name="Green R.E."/>
            <person name="Gustincich S."/>
            <person name="Harbers M."/>
            <person name="Hayashi Y."/>
            <person name="Hensch T.K."/>
            <person name="Hirokawa N."/>
            <person name="Hill D."/>
            <person name="Huminiecki L."/>
            <person name="Iacono M."/>
            <person name="Ikeo K."/>
            <person name="Iwama A."/>
            <person name="Ishikawa T."/>
            <person name="Jakt M."/>
            <person name="Kanapin A."/>
            <person name="Katoh M."/>
            <person name="Kawasawa Y."/>
            <person name="Kelso J."/>
            <person name="Kitamura H."/>
            <person name="Kitano H."/>
            <person name="Kollias G."/>
            <person name="Krishnan S.P."/>
            <person name="Kruger A."/>
            <person name="Kummerfeld S.K."/>
            <person name="Kurochkin I.V."/>
            <person name="Lareau L.F."/>
            <person name="Lazarevic D."/>
            <person name="Lipovich L."/>
            <person name="Liu J."/>
            <person name="Liuni S."/>
            <person name="McWilliam S."/>
            <person name="Madan Babu M."/>
            <person name="Madera M."/>
            <person name="Marchionni L."/>
            <person name="Matsuda H."/>
            <person name="Matsuzawa S."/>
            <person name="Miki H."/>
            <person name="Mignone F."/>
            <person name="Miyake S."/>
            <person name="Morris K."/>
            <person name="Mottagui-Tabar S."/>
            <person name="Mulder N."/>
            <person name="Nakano N."/>
            <person name="Nakauchi H."/>
            <person name="Ng P."/>
            <person name="Nilsson R."/>
            <person name="Nishiguchi S."/>
            <person name="Nishikawa S."/>
            <person name="Nori F."/>
            <person name="Ohara O."/>
            <person name="Okazaki Y."/>
            <person name="Orlando V."/>
            <person name="Pang K.C."/>
            <person name="Pavan W.J."/>
            <person name="Pavesi G."/>
            <person name="Pesole G."/>
            <person name="Petrovsky N."/>
            <person name="Piazza S."/>
            <person name="Reed J."/>
            <person name="Reid J.F."/>
            <person name="Ring B.Z."/>
            <person name="Ringwald M."/>
            <person name="Rost B."/>
            <person name="Ruan Y."/>
            <person name="Salzberg S.L."/>
            <person name="Sandelin A."/>
            <person name="Schneider C."/>
            <person name="Schoenbach C."/>
            <person name="Sekiguchi K."/>
            <person name="Semple C.A."/>
            <person name="Seno S."/>
            <person name="Sessa L."/>
            <person name="Sheng Y."/>
            <person name="Shibata Y."/>
            <person name="Shimada H."/>
            <person name="Shimada K."/>
            <person name="Silva D."/>
            <person name="Sinclair B."/>
            <person name="Sperling S."/>
            <person name="Stupka E."/>
            <person name="Sugiura K."/>
            <person name="Sultana R."/>
            <person name="Takenaka Y."/>
            <person name="Taki K."/>
            <person name="Tammoja K."/>
            <person name="Tan S.L."/>
            <person name="Tang S."/>
            <person name="Taylor M.S."/>
            <person name="Tegner J."/>
            <person name="Teichmann S.A."/>
            <person name="Ueda H.R."/>
            <person name="van Nimwegen E."/>
            <person name="Verardo R."/>
            <person name="Wei C.L."/>
            <person name="Yagi K."/>
            <person name="Yamanishi H."/>
            <person name="Zabarovsky E."/>
            <person name="Zhu S."/>
            <person name="Zimmer A."/>
            <person name="Hide W."/>
            <person name="Bult C."/>
            <person name="Grimmond S.M."/>
            <person name="Teasdale R.D."/>
            <person name="Liu E.T."/>
            <person name="Brusic V."/>
            <person name="Quackenbush J."/>
            <person name="Wahlestedt C."/>
            <person name="Mattick J.S."/>
            <person name="Hume D.A."/>
            <person name="Kai C."/>
            <person name="Sasaki D."/>
            <person name="Tomaru Y."/>
            <person name="Fukuda S."/>
            <person name="Kanamori-Katayama M."/>
            <person name="Suzuki M."/>
            <person name="Aoki J."/>
            <person name="Arakawa T."/>
            <person name="Iida J."/>
            <person name="Imamura K."/>
            <person name="Itoh M."/>
            <person name="Kato T."/>
            <person name="Kawaji H."/>
            <person name="Kawagashira N."/>
            <person name="Kawashima T."/>
            <person name="Kojima M."/>
            <person name="Kondo S."/>
            <person name="Konno H."/>
            <person name="Nakano K."/>
            <person name="Ninomiya N."/>
            <person name="Nishio T."/>
            <person name="Okada M."/>
            <person name="Plessy C."/>
            <person name="Shibata K."/>
            <person name="Shiraki T."/>
            <person name="Suzuki S."/>
            <person name="Tagami M."/>
            <person name="Waki K."/>
            <person name="Watahiki A."/>
            <person name="Okamura-Oho Y."/>
            <person name="Suzuki H."/>
            <person name="Kawai J."/>
            <person name="Hayashizaki Y."/>
        </authorList>
    </citation>
    <scope>NUCLEOTIDE SEQUENCE [LARGE SCALE MRNA] OF 247-479 (ISOFORM 1)</scope>
    <source>
        <strain>C57BL/6J</strain>
    </source>
</reference>
<reference key="3">
    <citation type="journal article" date="1998" name="J. Biol. Chem.">
        <title>Eps15R is a tyrosine kinase substrate with characteristics of a docking protein possibly involved in coated pits-mediated internalization.</title>
        <authorList>
            <person name="Coda L."/>
            <person name="Salcini A.E."/>
            <person name="Confalonieri S."/>
            <person name="Pelicci G."/>
            <person name="Sorkina T."/>
            <person name="Sorkin A."/>
            <person name="Pelicci P.G."/>
            <person name="Di Fiore P.P."/>
        </authorList>
    </citation>
    <scope>INTERACTION WITH EPS15R</scope>
</reference>
<reference key="4">
    <citation type="journal article" date="2010" name="Cell">
        <title>A tissue-specific atlas of mouse protein phosphorylation and expression.</title>
        <authorList>
            <person name="Huttlin E.L."/>
            <person name="Jedrychowski M.P."/>
            <person name="Elias J.E."/>
            <person name="Goswami T."/>
            <person name="Rad R."/>
            <person name="Beausoleil S.A."/>
            <person name="Villen J."/>
            <person name="Haas W."/>
            <person name="Sowa M.E."/>
            <person name="Gygi S.P."/>
        </authorList>
    </citation>
    <scope>IDENTIFICATION BY MASS SPECTROMETRY [LARGE SCALE ANALYSIS]</scope>
    <source>
        <tissue>Brain</tissue>
        <tissue>Kidney</tissue>
        <tissue>Liver</tissue>
        <tissue>Lung</tissue>
        <tissue>Spleen</tissue>
        <tissue>Testis</tissue>
    </source>
</reference>
<sequence>MVMAAKKGPGPGGGVGGSKAEAEAASEVWCRRVRELGGCSQAGNRHCFECAQRGVTYVDITVGSFVCTTCSGLLRGLNPPHRVKSISMTTFTEPEVLFLQSRGNEVCRKIWLGLFDARTSLIPDSRDPQKVKEFLQEKYEKKRWYVPPEQVKGPSYSKGSVSATPVQGSVPEGKPIRTLLGDPVPSLSDPASTSSQPGSQSQARSSSQARSSQPPSHSSTKKASTDLLADIGGDPFAAPQVVPAFASFPGFGVGQTPAHGGFANFDAFSSSPSSSTFGSLPPSVQAPFQAQPTPAGSGQMSAFGVAPLAAASQPNNLADVGGLLGPRMAAGGLPGSVFGMPSQVPALQSAVPGVSGSGGLPFGAYTNPFATPAQAQLPSTNPFQPNGLASGPGFGMSSVRPGLLQPVPPSGAFASPFSAPVFPTQAGLADQQNGSSFGDLGTSKLGQRPLSQPAGISTNPFMTGSSAFASKPPTTNPFL</sequence>
<name>AGFG2_MOUSE</name>
<organism>
    <name type="scientific">Mus musculus</name>
    <name type="common">Mouse</name>
    <dbReference type="NCBI Taxonomy" id="10090"/>
    <lineage>
        <taxon>Eukaryota</taxon>
        <taxon>Metazoa</taxon>
        <taxon>Chordata</taxon>
        <taxon>Craniata</taxon>
        <taxon>Vertebrata</taxon>
        <taxon>Euteleostomi</taxon>
        <taxon>Mammalia</taxon>
        <taxon>Eutheria</taxon>
        <taxon>Euarchontoglires</taxon>
        <taxon>Glires</taxon>
        <taxon>Rodentia</taxon>
        <taxon>Myomorpha</taxon>
        <taxon>Muroidea</taxon>
        <taxon>Muridae</taxon>
        <taxon>Murinae</taxon>
        <taxon>Mus</taxon>
        <taxon>Mus</taxon>
    </lineage>
</organism>
<feature type="chain" id="PRO_0000204829" description="Arf-GAP domain and FG repeat-containing protein 2">
    <location>
        <begin position="1"/>
        <end position="479"/>
    </location>
</feature>
<feature type="domain" description="Arf-GAP" evidence="2">
    <location>
        <begin position="27"/>
        <end position="153"/>
    </location>
</feature>
<feature type="zinc finger region" description="C4-type" evidence="2">
    <location>
        <begin position="47"/>
        <end position="70"/>
    </location>
</feature>
<feature type="region of interest" description="Disordered" evidence="3">
    <location>
        <begin position="150"/>
        <end position="223"/>
    </location>
</feature>
<feature type="region of interest" description="Disordered" evidence="3">
    <location>
        <begin position="450"/>
        <end position="479"/>
    </location>
</feature>
<feature type="compositionally biased region" description="Polar residues" evidence="3">
    <location>
        <begin position="157"/>
        <end position="167"/>
    </location>
</feature>
<feature type="compositionally biased region" description="Low complexity" evidence="3">
    <location>
        <begin position="194"/>
        <end position="218"/>
    </location>
</feature>
<feature type="compositionally biased region" description="Polar residues" evidence="3">
    <location>
        <begin position="454"/>
        <end position="479"/>
    </location>
</feature>
<feature type="modified residue" description="N6-acetyllysine" evidence="1">
    <location>
        <position position="174"/>
    </location>
</feature>
<feature type="splice variant" id="VSP_010669" description="In isoform 2." evidence="5">
    <original>VGQTPAHGGFANFDAFSSSPSSSTFGSLPPSVQAPFQ</original>
    <variation>GKYYPGAGTRLRRICITAKTSLVHRGLTFLCGWGQGA</variation>
    <location>
        <begin position="253"/>
        <end position="289"/>
    </location>
</feature>
<feature type="splice variant" id="VSP_010670" description="In isoform 2." evidence="5">
    <location>
        <begin position="290"/>
        <end position="479"/>
    </location>
</feature>
<accession>Q80WC7</accession>
<accession>Q8BKS5</accession>
<accession>Q99J67</accession>